<proteinExistence type="evidence at transcript level"/>
<reference key="1">
    <citation type="journal article" date="1995" name="J. Biol. Chem.">
        <title>Molecular cloning and functional analysis of a novel P2 nucleotide receptor.</title>
        <authorList>
            <person name="Chang K."/>
            <person name="Hanaoka K."/>
            <person name="Kumada M."/>
            <person name="Takuwa Y."/>
        </authorList>
    </citation>
    <scope>NUCLEOTIDE SEQUENCE [MRNA]</scope>
    <source>
        <tissue>Aortic smooth muscle</tissue>
    </source>
</reference>
<reference key="2">
    <citation type="journal article" date="2004" name="Genome Res.">
        <title>The status, quality, and expansion of the NIH full-length cDNA project: the Mammalian Gene Collection (MGC).</title>
        <authorList>
            <consortium name="The MGC Project Team"/>
        </authorList>
    </citation>
    <scope>NUCLEOTIDE SEQUENCE [LARGE SCALE MRNA]</scope>
    <source>
        <tissue>Heart</tissue>
    </source>
</reference>
<organism>
    <name type="scientific">Rattus norvegicus</name>
    <name type="common">Rat</name>
    <dbReference type="NCBI Taxonomy" id="10116"/>
    <lineage>
        <taxon>Eukaryota</taxon>
        <taxon>Metazoa</taxon>
        <taxon>Chordata</taxon>
        <taxon>Craniata</taxon>
        <taxon>Vertebrata</taxon>
        <taxon>Euteleostomi</taxon>
        <taxon>Mammalia</taxon>
        <taxon>Eutheria</taxon>
        <taxon>Euarchontoglires</taxon>
        <taxon>Glires</taxon>
        <taxon>Rodentia</taxon>
        <taxon>Myomorpha</taxon>
        <taxon>Muroidea</taxon>
        <taxon>Muridae</taxon>
        <taxon>Murinae</taxon>
        <taxon>Rattus</taxon>
    </lineage>
</organism>
<feature type="chain" id="PRO_0000070030" description="P2Y purinoceptor 6">
    <location>
        <begin position="1"/>
        <end position="328"/>
    </location>
</feature>
<feature type="topological domain" description="Extracellular" evidence="1">
    <location>
        <begin position="1"/>
        <end position="27"/>
    </location>
</feature>
<feature type="transmembrane region" description="Helical; Name=1" evidence="1">
    <location>
        <begin position="28"/>
        <end position="48"/>
    </location>
</feature>
<feature type="topological domain" description="Cytoplasmic" evidence="1">
    <location>
        <begin position="49"/>
        <end position="62"/>
    </location>
</feature>
<feature type="transmembrane region" description="Helical; Name=2" evidence="1">
    <location>
        <begin position="63"/>
        <end position="83"/>
    </location>
</feature>
<feature type="topological domain" description="Extracellular" evidence="1">
    <location>
        <begin position="84"/>
        <end position="101"/>
    </location>
</feature>
<feature type="transmembrane region" description="Helical; Name=3" evidence="1">
    <location>
        <begin position="102"/>
        <end position="122"/>
    </location>
</feature>
<feature type="topological domain" description="Cytoplasmic" evidence="1">
    <location>
        <begin position="123"/>
        <end position="144"/>
    </location>
</feature>
<feature type="transmembrane region" description="Helical; Name=4" evidence="1">
    <location>
        <begin position="145"/>
        <end position="165"/>
    </location>
</feature>
<feature type="topological domain" description="Extracellular" evidence="1">
    <location>
        <begin position="166"/>
        <end position="194"/>
    </location>
</feature>
<feature type="transmembrane region" description="Helical; Name=5" evidence="1">
    <location>
        <begin position="195"/>
        <end position="215"/>
    </location>
</feature>
<feature type="topological domain" description="Cytoplasmic" evidence="1">
    <location>
        <begin position="216"/>
        <end position="236"/>
    </location>
</feature>
<feature type="transmembrane region" description="Helical; Name=6" evidence="1">
    <location>
        <begin position="237"/>
        <end position="257"/>
    </location>
</feature>
<feature type="topological domain" description="Extracellular" evidence="1">
    <location>
        <begin position="258"/>
        <end position="280"/>
    </location>
</feature>
<feature type="transmembrane region" description="Helical; Name=7" evidence="1">
    <location>
        <begin position="281"/>
        <end position="303"/>
    </location>
</feature>
<feature type="topological domain" description="Cytoplasmic" evidence="1">
    <location>
        <begin position="304"/>
        <end position="328"/>
    </location>
</feature>
<feature type="glycosylation site" description="N-linked (GlcNAc...) asparagine" evidence="1">
    <location>
        <position position="5"/>
    </location>
</feature>
<feature type="glycosylation site" description="N-linked (GlcNAc...) asparagine" evidence="1">
    <location>
        <position position="173"/>
    </location>
</feature>
<feature type="disulfide bond" evidence="2">
    <location>
        <begin position="99"/>
        <end position="177"/>
    </location>
</feature>
<keyword id="KW-1003">Cell membrane</keyword>
<keyword id="KW-1015">Disulfide bond</keyword>
<keyword id="KW-0297">G-protein coupled receptor</keyword>
<keyword id="KW-0325">Glycoprotein</keyword>
<keyword id="KW-0472">Membrane</keyword>
<keyword id="KW-0675">Receptor</keyword>
<keyword id="KW-1185">Reference proteome</keyword>
<keyword id="KW-0807">Transducer</keyword>
<keyword id="KW-0812">Transmembrane</keyword>
<keyword id="KW-1133">Transmembrane helix</keyword>
<dbReference type="EMBL" id="D63665">
    <property type="protein sequence ID" value="BAA09816.1"/>
    <property type="molecule type" value="mRNA"/>
</dbReference>
<dbReference type="EMBL" id="BC072520">
    <property type="protein sequence ID" value="AAH72520.1"/>
    <property type="molecule type" value="mRNA"/>
</dbReference>
<dbReference type="PIR" id="I55450">
    <property type="entry name" value="I55450"/>
</dbReference>
<dbReference type="RefSeq" id="NP_476465.1">
    <property type="nucleotide sequence ID" value="NM_057124.2"/>
</dbReference>
<dbReference type="RefSeq" id="XP_006229773.1">
    <property type="nucleotide sequence ID" value="XM_006229711.2"/>
</dbReference>
<dbReference type="RefSeq" id="XP_006229774.1">
    <property type="nucleotide sequence ID" value="XM_006229712.4"/>
</dbReference>
<dbReference type="RefSeq" id="XP_006229775.1">
    <property type="nucleotide sequence ID" value="XM_006229713.5"/>
</dbReference>
<dbReference type="RefSeq" id="XP_006229776.1">
    <property type="nucleotide sequence ID" value="XM_006229714.3"/>
</dbReference>
<dbReference type="RefSeq" id="XP_006229777.1">
    <property type="nucleotide sequence ID" value="XM_006229715.4"/>
</dbReference>
<dbReference type="RefSeq" id="XP_006229778.1">
    <property type="nucleotide sequence ID" value="XM_006229716.2"/>
</dbReference>
<dbReference type="RefSeq" id="XP_006229779.1">
    <property type="nucleotide sequence ID" value="XM_006229717.3"/>
</dbReference>
<dbReference type="RefSeq" id="XP_038934800.1">
    <property type="nucleotide sequence ID" value="XM_039078872.2"/>
</dbReference>
<dbReference type="RefSeq" id="XP_063124080.1">
    <property type="nucleotide sequence ID" value="XM_063268010.1"/>
</dbReference>
<dbReference type="SMR" id="Q63371"/>
<dbReference type="CORUM" id="Q63371"/>
<dbReference type="FunCoup" id="Q63371">
    <property type="interactions" value="218"/>
</dbReference>
<dbReference type="STRING" id="10116.ENSRNOP00000049439"/>
<dbReference type="BindingDB" id="Q63371"/>
<dbReference type="ChEMBL" id="CHEMBL3543"/>
<dbReference type="GuidetoPHARMACOLOGY" id="326"/>
<dbReference type="GlyCosmos" id="Q63371">
    <property type="glycosylation" value="2 sites, No reported glycans"/>
</dbReference>
<dbReference type="GlyGen" id="Q63371">
    <property type="glycosylation" value="2 sites"/>
</dbReference>
<dbReference type="PhosphoSitePlus" id="Q63371"/>
<dbReference type="PaxDb" id="10116-ENSRNOP00000049439"/>
<dbReference type="Ensembl" id="ENSRNOT00000050227.3">
    <property type="protein sequence ID" value="ENSRNOP00000049439.2"/>
    <property type="gene ID" value="ENSRNOG00000019270.5"/>
</dbReference>
<dbReference type="Ensembl" id="ENSRNOT00000107101.1">
    <property type="protein sequence ID" value="ENSRNOP00000088558.1"/>
    <property type="gene ID" value="ENSRNOG00000019270.5"/>
</dbReference>
<dbReference type="Ensembl" id="ENSRNOT00000108172.1">
    <property type="protein sequence ID" value="ENSRNOP00000081429.1"/>
    <property type="gene ID" value="ENSRNOG00000019270.5"/>
</dbReference>
<dbReference type="Ensembl" id="ENSRNOT00000111790.1">
    <property type="protein sequence ID" value="ENSRNOP00000094637.1"/>
    <property type="gene ID" value="ENSRNOG00000019270.5"/>
</dbReference>
<dbReference type="Ensembl" id="ENSRNOT00000116084.1">
    <property type="protein sequence ID" value="ENSRNOP00000087971.1"/>
    <property type="gene ID" value="ENSRNOG00000019270.5"/>
</dbReference>
<dbReference type="GeneID" id="117264"/>
<dbReference type="KEGG" id="rno:117264"/>
<dbReference type="UCSC" id="RGD:620269">
    <property type="organism name" value="rat"/>
</dbReference>
<dbReference type="AGR" id="RGD:620269"/>
<dbReference type="CTD" id="5031"/>
<dbReference type="RGD" id="620269">
    <property type="gene designation" value="P2ry6"/>
</dbReference>
<dbReference type="eggNOG" id="ENOG502QRYJ">
    <property type="taxonomic scope" value="Eukaryota"/>
</dbReference>
<dbReference type="GeneTree" id="ENSGT01030000234621"/>
<dbReference type="HOGENOM" id="CLU_009579_8_2_1"/>
<dbReference type="InParanoid" id="Q63371"/>
<dbReference type="OMA" id="ICGGVWL"/>
<dbReference type="OrthoDB" id="9881476at2759"/>
<dbReference type="PhylomeDB" id="Q63371"/>
<dbReference type="TreeFam" id="TF330775"/>
<dbReference type="Reactome" id="R-RNO-416476">
    <property type="pathway name" value="G alpha (q) signalling events"/>
</dbReference>
<dbReference type="Reactome" id="R-RNO-417957">
    <property type="pathway name" value="P2Y receptors"/>
</dbReference>
<dbReference type="PRO" id="PR:Q63371"/>
<dbReference type="Proteomes" id="UP000002494">
    <property type="component" value="Chromosome 1"/>
</dbReference>
<dbReference type="Bgee" id="ENSRNOG00000019270">
    <property type="expression patterns" value="Expressed in spleen and 19 other cell types or tissues"/>
</dbReference>
<dbReference type="GO" id="GO:0016324">
    <property type="term" value="C:apical plasma membrane"/>
    <property type="evidence" value="ECO:0000314"/>
    <property type="project" value="RGD"/>
</dbReference>
<dbReference type="GO" id="GO:0016323">
    <property type="term" value="C:basolateral plasma membrane"/>
    <property type="evidence" value="ECO:0000314"/>
    <property type="project" value="RGD"/>
</dbReference>
<dbReference type="GO" id="GO:0005886">
    <property type="term" value="C:plasma membrane"/>
    <property type="evidence" value="ECO:0000318"/>
    <property type="project" value="GO_Central"/>
</dbReference>
<dbReference type="GO" id="GO:0001621">
    <property type="term" value="F:G protein-coupled ADP receptor activity"/>
    <property type="evidence" value="ECO:0000266"/>
    <property type="project" value="RGD"/>
</dbReference>
<dbReference type="GO" id="GO:0045029">
    <property type="term" value="F:G protein-coupled UDP receptor activity"/>
    <property type="evidence" value="ECO:0000266"/>
    <property type="project" value="RGD"/>
</dbReference>
<dbReference type="GO" id="GO:0045030">
    <property type="term" value="F:G protein-coupled UTP receptor activity"/>
    <property type="evidence" value="ECO:0000266"/>
    <property type="project" value="RGD"/>
</dbReference>
<dbReference type="GO" id="GO:0071380">
    <property type="term" value="P:cellular response to prostaglandin E stimulus"/>
    <property type="evidence" value="ECO:0000266"/>
    <property type="project" value="RGD"/>
</dbReference>
<dbReference type="GO" id="GO:0071415">
    <property type="term" value="P:cellular response to purine-containing compound"/>
    <property type="evidence" value="ECO:0000266"/>
    <property type="project" value="RGD"/>
</dbReference>
<dbReference type="GO" id="GO:1905835">
    <property type="term" value="P:cellular response to pyrimidine ribonucleotide"/>
    <property type="evidence" value="ECO:0000315"/>
    <property type="project" value="ARUK-UCL"/>
</dbReference>
<dbReference type="GO" id="GO:0007186">
    <property type="term" value="P:G protein-coupled receptor signaling pathway"/>
    <property type="evidence" value="ECO:0000318"/>
    <property type="project" value="GO_Central"/>
</dbReference>
<dbReference type="GO" id="GO:0006909">
    <property type="term" value="P:phagocytosis"/>
    <property type="evidence" value="ECO:0000315"/>
    <property type="project" value="ARUK-UCL"/>
</dbReference>
<dbReference type="GO" id="GO:0070374">
    <property type="term" value="P:positive regulation of ERK1 and ERK2 cascade"/>
    <property type="evidence" value="ECO:0000266"/>
    <property type="project" value="RGD"/>
</dbReference>
<dbReference type="GO" id="GO:0032962">
    <property type="term" value="P:positive regulation of inositol trisphosphate biosynthetic process"/>
    <property type="evidence" value="ECO:0000266"/>
    <property type="project" value="RGD"/>
</dbReference>
<dbReference type="GO" id="GO:0051281">
    <property type="term" value="P:positive regulation of release of sequestered calcium ion into cytosol"/>
    <property type="evidence" value="ECO:0000315"/>
    <property type="project" value="ARUK-UCL"/>
</dbReference>
<dbReference type="GO" id="GO:0014911">
    <property type="term" value="P:positive regulation of smooth muscle cell migration"/>
    <property type="evidence" value="ECO:0000315"/>
    <property type="project" value="RGD"/>
</dbReference>
<dbReference type="GO" id="GO:1904707">
    <property type="term" value="P:positive regulation of vascular associated smooth muscle cell proliferation"/>
    <property type="evidence" value="ECO:0000266"/>
    <property type="project" value="RGD"/>
</dbReference>
<dbReference type="GO" id="GO:0030321">
    <property type="term" value="P:transepithelial chloride transport"/>
    <property type="evidence" value="ECO:0000266"/>
    <property type="project" value="RGD"/>
</dbReference>
<dbReference type="FunFam" id="1.20.1070.10:FF:000209">
    <property type="entry name" value="p2Y purinoceptor 6"/>
    <property type="match status" value="1"/>
</dbReference>
<dbReference type="Gene3D" id="1.20.1070.10">
    <property type="entry name" value="Rhodopsin 7-helix transmembrane proteins"/>
    <property type="match status" value="1"/>
</dbReference>
<dbReference type="InterPro" id="IPR000276">
    <property type="entry name" value="GPCR_Rhodpsn"/>
</dbReference>
<dbReference type="InterPro" id="IPR017452">
    <property type="entry name" value="GPCR_Rhodpsn_7TM"/>
</dbReference>
<dbReference type="InterPro" id="IPR001973">
    <property type="entry name" value="P2Y6_rcpt"/>
</dbReference>
<dbReference type="PANTHER" id="PTHR24231:SF16">
    <property type="entry name" value="P2Y PURINOCEPTOR 6"/>
    <property type="match status" value="1"/>
</dbReference>
<dbReference type="PANTHER" id="PTHR24231">
    <property type="entry name" value="PURINOCEPTOR-RELATED G-PROTEIN COUPLED RECEPTOR"/>
    <property type="match status" value="1"/>
</dbReference>
<dbReference type="Pfam" id="PF00001">
    <property type="entry name" value="7tm_1"/>
    <property type="match status" value="1"/>
</dbReference>
<dbReference type="PRINTS" id="PR00237">
    <property type="entry name" value="GPCRRHODOPSN"/>
</dbReference>
<dbReference type="PRINTS" id="PR01068">
    <property type="entry name" value="P2Y6PRNOCPTR"/>
</dbReference>
<dbReference type="PRINTS" id="PR01157">
    <property type="entry name" value="P2YPURNOCPTR"/>
</dbReference>
<dbReference type="SUPFAM" id="SSF81321">
    <property type="entry name" value="Family A G protein-coupled receptor-like"/>
    <property type="match status" value="1"/>
</dbReference>
<dbReference type="PROSITE" id="PS50262">
    <property type="entry name" value="G_PROTEIN_RECEP_F1_2"/>
    <property type="match status" value="1"/>
</dbReference>
<comment type="function">
    <text>Receptor for extracellular UTP &gt; ADP = 2-methylthio-ATP &gt; ADP-beta-S &gt; ATP = ATP-gamma-S. The activity of this receptor is mediated by G proteins which activate a phosphatidylinositol-calcium second messenger system. Functionally coupled to phospholipase C.</text>
</comment>
<comment type="subcellular location">
    <subcellularLocation>
        <location>Cell membrane</location>
        <topology>Multi-pass membrane protein</topology>
    </subcellularLocation>
</comment>
<comment type="tissue specificity">
    <text>Abundantly expressed in various tissues including lung, stomach, intestine, spleen, mesentery, heart, and, most prominently, aorta.</text>
</comment>
<comment type="similarity">
    <text evidence="2">Belongs to the G-protein coupled receptor 1 family.</text>
</comment>
<sequence>MERDNGTIQAPGLPPTTCVYREDFKRLLLPPVYSVVLVVGLPLNVCVIAQICASRRTLTRSAVYTLNLALADLLYACSLPLLIYNYARGDHWPFGDLACRLVRFLFYANLHGSILFLTCISFQRYLGICHPLAPWHKRGGRRAAWVVCGVVWLVVTAQCLPTAVFAATGIQRNRTVCYDLSPPILSTRYLPYGMALTVIGFLLPFTALLACYCRMARRLCRQDGPAGPVAQERRSKAARMAVVVAAVFVISFLPFHITKTAYLAVRSTPGVSCPVLETFAAAYKGTRPFASANSVLDPILFYFTQQKFRRQPHDLLQKLTAKWQRQRV</sequence>
<protein>
    <recommendedName>
        <fullName>P2Y purinoceptor 6</fullName>
        <shortName>P2Y6</shortName>
    </recommendedName>
</protein>
<evidence type="ECO:0000255" key="1"/>
<evidence type="ECO:0000255" key="2">
    <source>
        <dbReference type="PROSITE-ProRule" id="PRU00521"/>
    </source>
</evidence>
<gene>
    <name type="primary">P2ry6</name>
</gene>
<accession>Q63371</accession>
<name>P2RY6_RAT</name>